<evidence type="ECO:0000250" key="1">
    <source>
        <dbReference type="UniProtKB" id="P22862"/>
    </source>
</evidence>
<evidence type="ECO:0000255" key="2"/>
<evidence type="ECO:0000269" key="3">
    <source>
    </source>
</evidence>
<evidence type="ECO:0000269" key="4">
    <source>
    </source>
</evidence>
<evidence type="ECO:0000269" key="5">
    <source>
    </source>
</evidence>
<evidence type="ECO:0000303" key="6">
    <source>
    </source>
</evidence>
<evidence type="ECO:0000303" key="7">
    <source>
    </source>
</evidence>
<evidence type="ECO:0000303" key="8">
    <source>
    </source>
</evidence>
<evidence type="ECO:0000305" key="9"/>
<accession>Q83WC8</accession>
<dbReference type="EC" id="3.1.1.35" evidence="3"/>
<dbReference type="EMBL" id="AB092339">
    <property type="protein sequence ID" value="BAC55927.1"/>
    <property type="molecule type" value="Genomic_DNA"/>
</dbReference>
<dbReference type="SMR" id="Q83WC8"/>
<dbReference type="ESTHER" id="acica-DCH">
    <property type="family name" value="Haloperoxidase"/>
</dbReference>
<dbReference type="BRENDA" id="3.1.1.35">
    <property type="organism ID" value="99"/>
</dbReference>
<dbReference type="GO" id="GO:0047856">
    <property type="term" value="F:dihydrocoumarin hydrolase activity"/>
    <property type="evidence" value="ECO:0007669"/>
    <property type="project" value="UniProtKB-EC"/>
</dbReference>
<dbReference type="FunFam" id="3.40.50.1820:FF:000205">
    <property type="entry name" value="Non-haem bromoperoxidase BPO-A2"/>
    <property type="match status" value="1"/>
</dbReference>
<dbReference type="Gene3D" id="3.40.50.1820">
    <property type="entry name" value="alpha/beta hydrolase"/>
    <property type="match status" value="1"/>
</dbReference>
<dbReference type="InterPro" id="IPR050471">
    <property type="entry name" value="AB_hydrolase"/>
</dbReference>
<dbReference type="InterPro" id="IPR000073">
    <property type="entry name" value="AB_hydrolase_1"/>
</dbReference>
<dbReference type="InterPro" id="IPR029058">
    <property type="entry name" value="AB_hydrolase_fold"/>
</dbReference>
<dbReference type="InterPro" id="IPR000639">
    <property type="entry name" value="Epox_hydrolase-like"/>
</dbReference>
<dbReference type="PANTHER" id="PTHR43433">
    <property type="entry name" value="HYDROLASE, ALPHA/BETA FOLD FAMILY PROTEIN"/>
    <property type="match status" value="1"/>
</dbReference>
<dbReference type="PANTHER" id="PTHR43433:SF3">
    <property type="entry name" value="NON-HEME CHLOROPEROXIDASE"/>
    <property type="match status" value="1"/>
</dbReference>
<dbReference type="Pfam" id="PF00561">
    <property type="entry name" value="Abhydrolase_1"/>
    <property type="match status" value="1"/>
</dbReference>
<dbReference type="PRINTS" id="PR00111">
    <property type="entry name" value="ABHYDROLASE"/>
</dbReference>
<dbReference type="PRINTS" id="PR00412">
    <property type="entry name" value="EPOXHYDRLASE"/>
</dbReference>
<dbReference type="SUPFAM" id="SSF53474">
    <property type="entry name" value="alpha/beta-Hydrolases"/>
    <property type="match status" value="1"/>
</dbReference>
<reference key="1">
    <citation type="journal article" date="2003" name="Eur. J. Biochem.">
        <title>Role of Acinetobacter calcoaceticus 3,4-dihydrocoumarin hydrolase in oxidative stress defence against peroxoacids.</title>
        <authorList>
            <person name="Honda K."/>
            <person name="Kataoka M."/>
            <person name="Sakuradani E."/>
            <person name="Shimizu S."/>
        </authorList>
    </citation>
    <scope>NUCLEOTIDE SEQUENCE [GENOMIC DNA]</scope>
    <scope>FUNCTION</scope>
    <scope>CATALYTIC ACTIVITY</scope>
    <scope>BIOPHYSICOCHEMICAL PROPERTIES</scope>
    <scope>DISRUPTION PHENOTYPE</scope>
    <source>
        <strain>F46</strain>
    </source>
</reference>
<reference key="2">
    <citation type="journal article" date="2000" name="Eur. J. Biochem.">
        <title>3,4-Dihydrocoumarin hydrolase with haloperoxidase activity from Acinetobacter calcoaceticus F46.</title>
        <authorList>
            <person name="Kataoka M."/>
            <person name="Honda K."/>
            <person name="Shimizu S."/>
        </authorList>
    </citation>
    <scope>PROTEIN SEQUENCE OF 2-237; 239-244 AND 248-276</scope>
    <scope>FUNCTION</scope>
    <scope>CATALYTIC ACTIVITY</scope>
    <scope>ACTIVITY REGULATION</scope>
    <scope>BIOPHYSICOCHEMICAL PROPERTIES</scope>
    <scope>SUBUNIT</scope>
    <source>
        <strain>F46</strain>
    </source>
</reference>
<reference key="3">
    <citation type="journal article" date="2002" name="Appl. Microbiol. Biotechnol.">
        <title>Enzymatic preparation of D-beta-acetylthioisobutyric acid and cetraxate hydrochloride using a stereo- and/or regioselective hydrolase, 3,4-dihydrocoumarin hydrolase from Acinetobacter calcoaceticus.</title>
        <authorList>
            <person name="Honda K."/>
            <person name="Kataoka M."/>
            <person name="Shimizu S."/>
        </authorList>
    </citation>
    <scope>FUNCTION IN LINEAR ESTERS HYDROLYSIS</scope>
    <scope>BIOPHYSICOCHEMICAL PROPERTIES</scope>
    <scope>BIOTECHNOLOGY</scope>
    <source>
        <strain>F46</strain>
    </source>
</reference>
<proteinExistence type="evidence at protein level"/>
<sequence length="276" mass="30708">MGYVTTKDGVDIFYKDWGPRDAPVIFFHHGWPLSSDDWDAQMLFFLKEGFRVVAHDRRGHGRSTQVWDGHDMDHYADDVAAVVEYLGVQGAVHVGHSTGGGEVAYYVARYPNDPVAKAVLISAVPPLMVKTESNPDGLPKEVFDDLQNQLFKNRSQFYHDVPAGPFYGFNRPGAKVSEPVVLNWWRQGMMGGAKAHYDGIVAFSQTDFTEALKKIEVPVLILHGEDDQVVPFEISGKKSAELVKNGKLISYPGFPHGMPTTEAETINKDLLAFIRS</sequence>
<gene>
    <name evidence="8" type="primary">dch</name>
</gene>
<organism>
    <name type="scientific">Acinetobacter calcoaceticus</name>
    <dbReference type="NCBI Taxonomy" id="471"/>
    <lineage>
        <taxon>Bacteria</taxon>
        <taxon>Pseudomonadati</taxon>
        <taxon>Pseudomonadota</taxon>
        <taxon>Gammaproteobacteria</taxon>
        <taxon>Moraxellales</taxon>
        <taxon>Moraxellaceae</taxon>
        <taxon>Acinetobacter</taxon>
        <taxon>Acinetobacter calcoaceticus/baumannii complex</taxon>
    </lineage>
</organism>
<name>DCH_ACICA</name>
<comment type="function">
    <text evidence="3 4 5">Multifunctional enzyme, which shows esterase and perhydrolase activities, and is capable of organic acid-assisted bromination of organic compounds (PubMed:10601844, PubMed:12542698). Catalyzes the hydrolysis of 3,4-dihydrocoumarin (PubMed:10601844, PubMed:12542698). Aromatic lactones other than 3,4-dihydrocoumarin, such as 2-coumaranone and homogentisic acid lactone, are also substrates, but their activities relative to that of 3,4-dihydrocoumarin are quite low (PubMed:10601844). Also catalyzes the hydrolysis of several linear esters, with specificity toward methyl esters (PubMed:12436309). In addition, shows perhydrolase activity and catalyzes the dose- and time-dependent degradation of peracetic acid, a broad-spectrum biocide, to acetic acid and hydrogen peroxide (PubMed:12542698). It suggests that in vivo DCH may play a role in the oxidative stress defense system and detoxify peroxoacids in conjunction with the catalase, i.e. peroxoacids are first hydrolyzed to the corresponding acids and hydrogen peroxide by DCH, and then the resulting hydrogen peroxide is degraded by the catalase (PubMed:12542698). Also shows organic acid-assisted bromination activity toward monochlorodimedon when incubated with hydrogen peroxide and dihydrocoumarin or an organic acid, such as acetate and n-butyrate (PubMed:10601844, PubMed:12542698).</text>
</comment>
<comment type="catalytic activity">
    <reaction evidence="3 5">
        <text>3,4-dihydrocoumarin + H2O = 3-(2-hydroxyphenyl)propanoate + H(+)</text>
        <dbReference type="Rhea" id="RHEA:10360"/>
        <dbReference type="ChEBI" id="CHEBI:15377"/>
        <dbReference type="ChEBI" id="CHEBI:15378"/>
        <dbReference type="ChEBI" id="CHEBI:16151"/>
        <dbReference type="ChEBI" id="CHEBI:46957"/>
        <dbReference type="EC" id="3.1.1.35"/>
    </reaction>
</comment>
<comment type="catalytic activity">
    <reaction evidence="5">
        <text>peracetic acid + H2O = acetate + H2O2 + H(+)</text>
        <dbReference type="Rhea" id="RHEA:68392"/>
        <dbReference type="ChEBI" id="CHEBI:15377"/>
        <dbReference type="ChEBI" id="CHEBI:15378"/>
        <dbReference type="ChEBI" id="CHEBI:16240"/>
        <dbReference type="ChEBI" id="CHEBI:30089"/>
        <dbReference type="ChEBI" id="CHEBI:42530"/>
    </reaction>
</comment>
<comment type="catalytic activity">
    <reaction evidence="5">
        <text>a percarboxylic acid + H2O = a carboxylate + H2O2 + H(+)</text>
        <dbReference type="Rhea" id="RHEA:68396"/>
        <dbReference type="ChEBI" id="CHEBI:15377"/>
        <dbReference type="ChEBI" id="CHEBI:15378"/>
        <dbReference type="ChEBI" id="CHEBI:16240"/>
        <dbReference type="ChEBI" id="CHEBI:29067"/>
        <dbReference type="ChEBI" id="CHEBI:177878"/>
    </reaction>
</comment>
<comment type="activity regulation">
    <text evidence="3">Inhibited by the serine protease inhibitors diisopropyl fluorophosphate and phenylmethanesulfonyl fluoride.</text>
</comment>
<comment type="biophysicochemical properties">
    <kinetics>
        <KM evidence="3">0.806 mM for 3,4-dihydrocoumarin</KM>
        <KM evidence="5">0.39 mM for peracetic acid</KM>
        <KM evidence="3">0.761 mM for 2-coumaranone</KM>
        <KM evidence="3">0.56 mM for homogentisic acid gamma-lactone</KM>
        <KM evidence="4">25.9 mM for methyl DL-beta-acetylthioisobutyrate (DL-MAT)</KM>
        <KM evidence="4">54.1 mM for dimethyl (R)-methylsuccinate</KM>
        <KM evidence="4">2.54 mM for methyl 3-(4-hydroxyphenyl)-propionate</KM>
        <KM evidence="4">6.88 mM for methyl cetraxate hydrochloride</KM>
        <Vmax evidence="3">4760.0 umol/min/mg enzyme with 3,4-dihydrocoumarin as substrate</Vmax>
        <Vmax evidence="5">12600.0 umol/min/mg enzyme with peracetic acid as substrate</Vmax>
        <Vmax evidence="3">8.0 umol/min/mg enzyme with 2-coumaranone as substrate</Vmax>
        <Vmax evidence="3">0.96 umol/min/mg enzyme with homogentisic acid gamma-lactone as substrate</Vmax>
        <Vmax evidence="4">1440.0 umol/min/mg enzyme with methyl DL-beta-acetylthioisobutyrate as substrate</Vmax>
        <Vmax evidence="4">71.4 umol/min/mg enzyme with dimethyl (R)-methylsuccinate as substrate</Vmax>
        <Vmax evidence="4">4.54 umol/min/mg enzyme with methyl 3-(4-hydroxyphenyl)-propionate as substrate</Vmax>
        <Vmax evidence="4">185.0 umol/min/mg enzyme with methyl cetraxate hydrochloride as substrate</Vmax>
    </kinetics>
    <phDependence>
        <text evidence="3">Optimum pH is 7.0-8.0.</text>
    </phDependence>
    <temperatureDependence>
        <text evidence="3">Optimum temperature is 30 degrees Celsius. Stable below 75 degrees Celsius, and retains 69% of the original activity at 80 degrees Celsius.</text>
    </temperatureDependence>
</comment>
<comment type="subunit">
    <text evidence="3">Homodimer.</text>
</comment>
<comment type="disruption phenotype">
    <text evidence="5">Disruption mutant is more sensitive to growth inhibition by peracetic acid than the parent strain. The sensitivities to hydrogen peroxide and acetic acid are not affected.</text>
</comment>
<comment type="biotechnology">
    <text evidence="4">Can convert substrates at high concentrations to desirable products in a short time. Thus, DCH exhibits significant hydrolysis activity, with stereo and/or regioselectivity, toward the methyl esters of bacetylthioisobutyrate and cetraxate, and is expected to be applicable to the practical synthesis of these compounds.</text>
</comment>
<comment type="similarity">
    <text evidence="9">Belongs to the AB hydrolase superfamily. Bacterial non-heme haloperoxidase / perhydrolase family.</text>
</comment>
<keyword id="KW-0903">Direct protein sequencing</keyword>
<keyword id="KW-0378">Hydrolase</keyword>
<protein>
    <recommendedName>
        <fullName evidence="9">Bifunctional esterase/perhydrolase DCH</fullName>
    </recommendedName>
    <alternativeName>
        <fullName evidence="6">3,4-dihydrocoumarin hydrolase</fullName>
        <shortName evidence="7">DCH</shortName>
        <ecNumber evidence="3">3.1.1.35</ecNumber>
    </alternativeName>
    <alternativeName>
        <fullName evidence="9">Metal-free haloperoxidase</fullName>
    </alternativeName>
</protein>
<feature type="initiator methionine" description="Removed" evidence="3">
    <location>
        <position position="1"/>
    </location>
</feature>
<feature type="chain" id="PRO_0000453900" description="Bifunctional esterase/perhydrolase DCH">
    <location>
        <begin position="2"/>
        <end position="276"/>
    </location>
</feature>
<feature type="domain" description="AB hydrolase-1" evidence="2">
    <location>
        <begin position="23"/>
        <end position="254"/>
    </location>
</feature>
<feature type="active site" evidence="1">
    <location>
        <position position="97"/>
    </location>
</feature>
<feature type="active site" evidence="1">
    <location>
        <position position="227"/>
    </location>
</feature>
<feature type="active site" evidence="1">
    <location>
        <position position="256"/>
    </location>
</feature>